<feature type="chain" id="PRO_1000073003" description="Putative phosphoenolpyruvate synthase regulatory protein">
    <location>
        <begin position="1"/>
        <end position="277"/>
    </location>
</feature>
<feature type="binding site" evidence="1">
    <location>
        <begin position="157"/>
        <end position="164"/>
    </location>
    <ligand>
        <name>ADP</name>
        <dbReference type="ChEBI" id="CHEBI:456216"/>
    </ligand>
</feature>
<comment type="function">
    <text evidence="1">Bifunctional serine/threonine kinase and phosphorylase involved in the regulation of the phosphoenolpyruvate synthase (PEPS) by catalyzing its phosphorylation/dephosphorylation.</text>
</comment>
<comment type="catalytic activity">
    <reaction evidence="1">
        <text>[pyruvate, water dikinase] + ADP = [pyruvate, water dikinase]-phosphate + AMP + H(+)</text>
        <dbReference type="Rhea" id="RHEA:46020"/>
        <dbReference type="Rhea" id="RHEA-COMP:11425"/>
        <dbReference type="Rhea" id="RHEA-COMP:11426"/>
        <dbReference type="ChEBI" id="CHEBI:15378"/>
        <dbReference type="ChEBI" id="CHEBI:43176"/>
        <dbReference type="ChEBI" id="CHEBI:68546"/>
        <dbReference type="ChEBI" id="CHEBI:456215"/>
        <dbReference type="ChEBI" id="CHEBI:456216"/>
        <dbReference type="EC" id="2.7.11.33"/>
    </reaction>
</comment>
<comment type="catalytic activity">
    <reaction evidence="1">
        <text>[pyruvate, water dikinase]-phosphate + phosphate + H(+) = [pyruvate, water dikinase] + diphosphate</text>
        <dbReference type="Rhea" id="RHEA:48580"/>
        <dbReference type="Rhea" id="RHEA-COMP:11425"/>
        <dbReference type="Rhea" id="RHEA-COMP:11426"/>
        <dbReference type="ChEBI" id="CHEBI:15378"/>
        <dbReference type="ChEBI" id="CHEBI:33019"/>
        <dbReference type="ChEBI" id="CHEBI:43176"/>
        <dbReference type="ChEBI" id="CHEBI:43474"/>
        <dbReference type="ChEBI" id="CHEBI:68546"/>
        <dbReference type="EC" id="2.7.4.28"/>
    </reaction>
</comment>
<comment type="similarity">
    <text evidence="1">Belongs to the pyruvate, phosphate/water dikinase regulatory protein family. PSRP subfamily.</text>
</comment>
<organism>
    <name type="scientific">Enterobacter sp. (strain 638)</name>
    <dbReference type="NCBI Taxonomy" id="399742"/>
    <lineage>
        <taxon>Bacteria</taxon>
        <taxon>Pseudomonadati</taxon>
        <taxon>Pseudomonadota</taxon>
        <taxon>Gammaproteobacteria</taxon>
        <taxon>Enterobacterales</taxon>
        <taxon>Enterobacteriaceae</taxon>
        <taxon>Enterobacter</taxon>
    </lineage>
</organism>
<accession>A4W9P3</accession>
<name>PSRP_ENT38</name>
<keyword id="KW-0418">Kinase</keyword>
<keyword id="KW-0547">Nucleotide-binding</keyword>
<keyword id="KW-0723">Serine/threonine-protein kinase</keyword>
<keyword id="KW-0808">Transferase</keyword>
<dbReference type="EC" id="2.7.11.33" evidence="1"/>
<dbReference type="EC" id="2.7.4.28" evidence="1"/>
<dbReference type="EMBL" id="CP000653">
    <property type="protein sequence ID" value="ABP60423.1"/>
    <property type="molecule type" value="Genomic_DNA"/>
</dbReference>
<dbReference type="RefSeq" id="WP_012017138.1">
    <property type="nucleotide sequence ID" value="NC_009436.1"/>
</dbReference>
<dbReference type="SMR" id="A4W9P3"/>
<dbReference type="STRING" id="399742.Ent638_1744"/>
<dbReference type="KEGG" id="ent:Ent638_1744"/>
<dbReference type="eggNOG" id="COG1806">
    <property type="taxonomic scope" value="Bacteria"/>
</dbReference>
<dbReference type="HOGENOM" id="CLU_046206_1_0_6"/>
<dbReference type="OrthoDB" id="9782201at2"/>
<dbReference type="Proteomes" id="UP000000230">
    <property type="component" value="Chromosome"/>
</dbReference>
<dbReference type="GO" id="GO:0043531">
    <property type="term" value="F:ADP binding"/>
    <property type="evidence" value="ECO:0007669"/>
    <property type="project" value="UniProtKB-UniRule"/>
</dbReference>
<dbReference type="GO" id="GO:0005524">
    <property type="term" value="F:ATP binding"/>
    <property type="evidence" value="ECO:0007669"/>
    <property type="project" value="InterPro"/>
</dbReference>
<dbReference type="GO" id="GO:0016776">
    <property type="term" value="F:phosphotransferase activity, phosphate group as acceptor"/>
    <property type="evidence" value="ECO:0007669"/>
    <property type="project" value="UniProtKB-UniRule"/>
</dbReference>
<dbReference type="GO" id="GO:0004674">
    <property type="term" value="F:protein serine/threonine kinase activity"/>
    <property type="evidence" value="ECO:0007669"/>
    <property type="project" value="UniProtKB-UniRule"/>
</dbReference>
<dbReference type="HAMAP" id="MF_01062">
    <property type="entry name" value="PSRP"/>
    <property type="match status" value="1"/>
</dbReference>
<dbReference type="InterPro" id="IPR005177">
    <property type="entry name" value="Kinase-pyrophosphorylase"/>
</dbReference>
<dbReference type="InterPro" id="IPR026530">
    <property type="entry name" value="PSRP"/>
</dbReference>
<dbReference type="NCBIfam" id="NF003742">
    <property type="entry name" value="PRK05339.1"/>
    <property type="match status" value="1"/>
</dbReference>
<dbReference type="PANTHER" id="PTHR31756">
    <property type="entry name" value="PYRUVATE, PHOSPHATE DIKINASE REGULATORY PROTEIN 1, CHLOROPLASTIC"/>
    <property type="match status" value="1"/>
</dbReference>
<dbReference type="PANTHER" id="PTHR31756:SF3">
    <property type="entry name" value="PYRUVATE, PHOSPHATE DIKINASE REGULATORY PROTEIN 1, CHLOROPLASTIC"/>
    <property type="match status" value="1"/>
</dbReference>
<dbReference type="Pfam" id="PF03618">
    <property type="entry name" value="Kinase-PPPase"/>
    <property type="match status" value="1"/>
</dbReference>
<evidence type="ECO:0000255" key="1">
    <source>
        <dbReference type="HAMAP-Rule" id="MF_01062"/>
    </source>
</evidence>
<protein>
    <recommendedName>
        <fullName evidence="1">Putative phosphoenolpyruvate synthase regulatory protein</fullName>
        <shortName evidence="1">PEP synthase regulatory protein</shortName>
        <shortName evidence="1">PSRP</shortName>
        <ecNumber evidence="1">2.7.11.33</ecNumber>
        <ecNumber evidence="1">2.7.4.28</ecNumber>
    </recommendedName>
    <alternativeName>
        <fullName evidence="1">Pyruvate, water dikinase regulatory protein</fullName>
    </alternativeName>
</protein>
<sequence>MDNAVDRHVFYISDGTAITAEVLGHAVMSQFPVAINSITLPFVENESRAKAVKEQIDAIFQQTGTRPLVFYSIVIPEIRDIILQSEGFCQDIVQALVAPLQGELKLDPTPIAHRTHGLNPGNLIKYDARIAAIDYTLAHDDGISMRNLDQAQVILLGVSRCGKTPTSLYLAMQFGIRAANYPFIADDMDNLVLPPALKPLQHKLFGLTINPERLAAIREERRENSRYASMRQCRMEVSEVEALYRKNQIPWLNSTNYSVEEIATKILDIMGLNRRMY</sequence>
<proteinExistence type="inferred from homology"/>
<reference key="1">
    <citation type="journal article" date="2010" name="PLoS Genet.">
        <title>Genome sequence of the plant growth promoting endophytic bacterium Enterobacter sp. 638.</title>
        <authorList>
            <person name="Taghavi S."/>
            <person name="van der Lelie D."/>
            <person name="Hoffman A."/>
            <person name="Zhang Y.B."/>
            <person name="Walla M.D."/>
            <person name="Vangronsveld J."/>
            <person name="Newman L."/>
            <person name="Monchy S."/>
        </authorList>
    </citation>
    <scope>NUCLEOTIDE SEQUENCE [LARGE SCALE GENOMIC DNA]</scope>
    <source>
        <strain>638</strain>
    </source>
</reference>
<gene>
    <name type="ordered locus">Ent638_1744</name>
</gene>